<proteinExistence type="inferred from homology"/>
<name>RS3_ENT38</name>
<accession>A4WFC2</accession>
<comment type="function">
    <text evidence="1">Binds the lower part of the 30S subunit head. Binds mRNA in the 70S ribosome, positioning it for translation.</text>
</comment>
<comment type="subunit">
    <text evidence="1">Part of the 30S ribosomal subunit. Forms a tight complex with proteins S10 and S14.</text>
</comment>
<comment type="similarity">
    <text evidence="1">Belongs to the universal ribosomal protein uS3 family.</text>
</comment>
<organism>
    <name type="scientific">Enterobacter sp. (strain 638)</name>
    <dbReference type="NCBI Taxonomy" id="399742"/>
    <lineage>
        <taxon>Bacteria</taxon>
        <taxon>Pseudomonadati</taxon>
        <taxon>Pseudomonadota</taxon>
        <taxon>Gammaproteobacteria</taxon>
        <taxon>Enterobacterales</taxon>
        <taxon>Enterobacteriaceae</taxon>
        <taxon>Enterobacter</taxon>
    </lineage>
</organism>
<keyword id="KW-0687">Ribonucleoprotein</keyword>
<keyword id="KW-0689">Ribosomal protein</keyword>
<keyword id="KW-0694">RNA-binding</keyword>
<keyword id="KW-0699">rRNA-binding</keyword>
<reference key="1">
    <citation type="journal article" date="2010" name="PLoS Genet.">
        <title>Genome sequence of the plant growth promoting endophytic bacterium Enterobacter sp. 638.</title>
        <authorList>
            <person name="Taghavi S."/>
            <person name="van der Lelie D."/>
            <person name="Hoffman A."/>
            <person name="Zhang Y.B."/>
            <person name="Walla M.D."/>
            <person name="Vangronsveld J."/>
            <person name="Newman L."/>
            <person name="Monchy S."/>
        </authorList>
    </citation>
    <scope>NUCLEOTIDE SEQUENCE [LARGE SCALE GENOMIC DNA]</scope>
    <source>
        <strain>638</strain>
    </source>
</reference>
<sequence length="233" mass="25983">MGQKVHPNGIRLGIVKPWNSTWFANTKEFADNLDSDFKVRQYLTKELAKASVSRIVIERPAKSIRVTIHTARPGIVIGKKGEDVEKLRKVVADIAGVPAQINIAEVRKPELDAKLVADSITSQLERRVMFRRAMKRAVQNAMRLGAKGIKVEVSGRLGGAEIARTEWYREGRVPLHTLRADIDYNTSEAHTTYGVIGVKVWIFKGEILGGMAAVEQPEKPAAQPKKQQRKGRK</sequence>
<feature type="chain" id="PRO_1000086119" description="Small ribosomal subunit protein uS3">
    <location>
        <begin position="1"/>
        <end position="233"/>
    </location>
</feature>
<feature type="domain" description="KH type-2" evidence="1">
    <location>
        <begin position="39"/>
        <end position="107"/>
    </location>
</feature>
<dbReference type="EMBL" id="CP000653">
    <property type="protein sequence ID" value="ABP62402.1"/>
    <property type="molecule type" value="Genomic_DNA"/>
</dbReference>
<dbReference type="RefSeq" id="WP_000529945.1">
    <property type="nucleotide sequence ID" value="NC_009436.1"/>
</dbReference>
<dbReference type="SMR" id="A4WFC2"/>
<dbReference type="STRING" id="399742.Ent638_3745"/>
<dbReference type="GeneID" id="97603663"/>
<dbReference type="KEGG" id="ent:Ent638_3745"/>
<dbReference type="eggNOG" id="COG0092">
    <property type="taxonomic scope" value="Bacteria"/>
</dbReference>
<dbReference type="HOGENOM" id="CLU_058591_0_2_6"/>
<dbReference type="OrthoDB" id="9806396at2"/>
<dbReference type="Proteomes" id="UP000000230">
    <property type="component" value="Chromosome"/>
</dbReference>
<dbReference type="GO" id="GO:0022627">
    <property type="term" value="C:cytosolic small ribosomal subunit"/>
    <property type="evidence" value="ECO:0007669"/>
    <property type="project" value="TreeGrafter"/>
</dbReference>
<dbReference type="GO" id="GO:0003729">
    <property type="term" value="F:mRNA binding"/>
    <property type="evidence" value="ECO:0007669"/>
    <property type="project" value="UniProtKB-UniRule"/>
</dbReference>
<dbReference type="GO" id="GO:0019843">
    <property type="term" value="F:rRNA binding"/>
    <property type="evidence" value="ECO:0007669"/>
    <property type="project" value="UniProtKB-UniRule"/>
</dbReference>
<dbReference type="GO" id="GO:0003735">
    <property type="term" value="F:structural constituent of ribosome"/>
    <property type="evidence" value="ECO:0007669"/>
    <property type="project" value="InterPro"/>
</dbReference>
<dbReference type="GO" id="GO:0006412">
    <property type="term" value="P:translation"/>
    <property type="evidence" value="ECO:0007669"/>
    <property type="project" value="UniProtKB-UniRule"/>
</dbReference>
<dbReference type="CDD" id="cd02412">
    <property type="entry name" value="KH-II_30S_S3"/>
    <property type="match status" value="1"/>
</dbReference>
<dbReference type="FunFam" id="3.30.1140.32:FF:000001">
    <property type="entry name" value="30S ribosomal protein S3"/>
    <property type="match status" value="1"/>
</dbReference>
<dbReference type="FunFam" id="3.30.300.20:FF:000001">
    <property type="entry name" value="30S ribosomal protein S3"/>
    <property type="match status" value="1"/>
</dbReference>
<dbReference type="Gene3D" id="3.30.300.20">
    <property type="match status" value="1"/>
</dbReference>
<dbReference type="Gene3D" id="3.30.1140.32">
    <property type="entry name" value="Ribosomal protein S3, C-terminal domain"/>
    <property type="match status" value="1"/>
</dbReference>
<dbReference type="HAMAP" id="MF_01309_B">
    <property type="entry name" value="Ribosomal_uS3_B"/>
    <property type="match status" value="1"/>
</dbReference>
<dbReference type="InterPro" id="IPR004087">
    <property type="entry name" value="KH_dom"/>
</dbReference>
<dbReference type="InterPro" id="IPR015946">
    <property type="entry name" value="KH_dom-like_a/b"/>
</dbReference>
<dbReference type="InterPro" id="IPR004044">
    <property type="entry name" value="KH_dom_type_2"/>
</dbReference>
<dbReference type="InterPro" id="IPR009019">
    <property type="entry name" value="KH_sf_prok-type"/>
</dbReference>
<dbReference type="InterPro" id="IPR036419">
    <property type="entry name" value="Ribosomal_S3_C_sf"/>
</dbReference>
<dbReference type="InterPro" id="IPR005704">
    <property type="entry name" value="Ribosomal_uS3_bac-typ"/>
</dbReference>
<dbReference type="InterPro" id="IPR001351">
    <property type="entry name" value="Ribosomal_uS3_C"/>
</dbReference>
<dbReference type="InterPro" id="IPR018280">
    <property type="entry name" value="Ribosomal_uS3_CS"/>
</dbReference>
<dbReference type="NCBIfam" id="TIGR01009">
    <property type="entry name" value="rpsC_bact"/>
    <property type="match status" value="1"/>
</dbReference>
<dbReference type="PANTHER" id="PTHR11760">
    <property type="entry name" value="30S/40S RIBOSOMAL PROTEIN S3"/>
    <property type="match status" value="1"/>
</dbReference>
<dbReference type="PANTHER" id="PTHR11760:SF19">
    <property type="entry name" value="SMALL RIBOSOMAL SUBUNIT PROTEIN US3C"/>
    <property type="match status" value="1"/>
</dbReference>
<dbReference type="Pfam" id="PF07650">
    <property type="entry name" value="KH_2"/>
    <property type="match status" value="1"/>
</dbReference>
<dbReference type="Pfam" id="PF00189">
    <property type="entry name" value="Ribosomal_S3_C"/>
    <property type="match status" value="1"/>
</dbReference>
<dbReference type="SMART" id="SM00322">
    <property type="entry name" value="KH"/>
    <property type="match status" value="1"/>
</dbReference>
<dbReference type="SUPFAM" id="SSF54814">
    <property type="entry name" value="Prokaryotic type KH domain (KH-domain type II)"/>
    <property type="match status" value="1"/>
</dbReference>
<dbReference type="SUPFAM" id="SSF54821">
    <property type="entry name" value="Ribosomal protein S3 C-terminal domain"/>
    <property type="match status" value="1"/>
</dbReference>
<dbReference type="PROSITE" id="PS50823">
    <property type="entry name" value="KH_TYPE_2"/>
    <property type="match status" value="1"/>
</dbReference>
<dbReference type="PROSITE" id="PS00548">
    <property type="entry name" value="RIBOSOMAL_S3"/>
    <property type="match status" value="1"/>
</dbReference>
<evidence type="ECO:0000255" key="1">
    <source>
        <dbReference type="HAMAP-Rule" id="MF_01309"/>
    </source>
</evidence>
<evidence type="ECO:0000305" key="2"/>
<protein>
    <recommendedName>
        <fullName evidence="1">Small ribosomal subunit protein uS3</fullName>
    </recommendedName>
    <alternativeName>
        <fullName evidence="2">30S ribosomal protein S3</fullName>
    </alternativeName>
</protein>
<gene>
    <name evidence="1" type="primary">rpsC</name>
    <name type="ordered locus">Ent638_3745</name>
</gene>